<keyword id="KW-1003">Cell membrane</keyword>
<keyword id="KW-0297">G-protein coupled receptor</keyword>
<keyword id="KW-0325">Glycoprotein</keyword>
<keyword id="KW-0472">Membrane</keyword>
<keyword id="KW-0675">Receptor</keyword>
<keyword id="KW-1185">Reference proteome</keyword>
<keyword id="KW-0807">Transducer</keyword>
<keyword id="KW-0812">Transmembrane</keyword>
<keyword id="KW-1133">Transmembrane helix</keyword>
<evidence type="ECO:0000255" key="1"/>
<evidence type="ECO:0000255" key="2">
    <source>
        <dbReference type="PROSITE-ProRule" id="PRU00521"/>
    </source>
</evidence>
<evidence type="ECO:0000305" key="3"/>
<reference key="1">
    <citation type="journal article" date="2000" name="Biochem. Biophys. Res. Commun.">
        <title>Brain-specific expression of novel G-protein-coupled receptors, with homologies to Xenopus PSP24 and human GPR45.</title>
        <authorList>
            <person name="Kawasawa Y."/>
            <person name="Kume K."/>
            <person name="Nakade S."/>
            <person name="Haga H."/>
            <person name="Izumi T."/>
            <person name="Shimizu T."/>
        </authorList>
    </citation>
    <scope>NUCLEOTIDE SEQUENCE [GENOMIC DNA]</scope>
</reference>
<reference key="2">
    <citation type="journal article" date="2005" name="Science">
        <title>The transcriptional landscape of the mammalian genome.</title>
        <authorList>
            <person name="Carninci P."/>
            <person name="Kasukawa T."/>
            <person name="Katayama S."/>
            <person name="Gough J."/>
            <person name="Frith M.C."/>
            <person name="Maeda N."/>
            <person name="Oyama R."/>
            <person name="Ravasi T."/>
            <person name="Lenhard B."/>
            <person name="Wells C."/>
            <person name="Kodzius R."/>
            <person name="Shimokawa K."/>
            <person name="Bajic V.B."/>
            <person name="Brenner S.E."/>
            <person name="Batalov S."/>
            <person name="Forrest A.R."/>
            <person name="Zavolan M."/>
            <person name="Davis M.J."/>
            <person name="Wilming L.G."/>
            <person name="Aidinis V."/>
            <person name="Allen J.E."/>
            <person name="Ambesi-Impiombato A."/>
            <person name="Apweiler R."/>
            <person name="Aturaliya R.N."/>
            <person name="Bailey T.L."/>
            <person name="Bansal M."/>
            <person name="Baxter L."/>
            <person name="Beisel K.W."/>
            <person name="Bersano T."/>
            <person name="Bono H."/>
            <person name="Chalk A.M."/>
            <person name="Chiu K.P."/>
            <person name="Choudhary V."/>
            <person name="Christoffels A."/>
            <person name="Clutterbuck D.R."/>
            <person name="Crowe M.L."/>
            <person name="Dalla E."/>
            <person name="Dalrymple B.P."/>
            <person name="de Bono B."/>
            <person name="Della Gatta G."/>
            <person name="di Bernardo D."/>
            <person name="Down T."/>
            <person name="Engstrom P."/>
            <person name="Fagiolini M."/>
            <person name="Faulkner G."/>
            <person name="Fletcher C.F."/>
            <person name="Fukushima T."/>
            <person name="Furuno M."/>
            <person name="Futaki S."/>
            <person name="Gariboldi M."/>
            <person name="Georgii-Hemming P."/>
            <person name="Gingeras T.R."/>
            <person name="Gojobori T."/>
            <person name="Green R.E."/>
            <person name="Gustincich S."/>
            <person name="Harbers M."/>
            <person name="Hayashi Y."/>
            <person name="Hensch T.K."/>
            <person name="Hirokawa N."/>
            <person name="Hill D."/>
            <person name="Huminiecki L."/>
            <person name="Iacono M."/>
            <person name="Ikeo K."/>
            <person name="Iwama A."/>
            <person name="Ishikawa T."/>
            <person name="Jakt M."/>
            <person name="Kanapin A."/>
            <person name="Katoh M."/>
            <person name="Kawasawa Y."/>
            <person name="Kelso J."/>
            <person name="Kitamura H."/>
            <person name="Kitano H."/>
            <person name="Kollias G."/>
            <person name="Krishnan S.P."/>
            <person name="Kruger A."/>
            <person name="Kummerfeld S.K."/>
            <person name="Kurochkin I.V."/>
            <person name="Lareau L.F."/>
            <person name="Lazarevic D."/>
            <person name="Lipovich L."/>
            <person name="Liu J."/>
            <person name="Liuni S."/>
            <person name="McWilliam S."/>
            <person name="Madan Babu M."/>
            <person name="Madera M."/>
            <person name="Marchionni L."/>
            <person name="Matsuda H."/>
            <person name="Matsuzawa S."/>
            <person name="Miki H."/>
            <person name="Mignone F."/>
            <person name="Miyake S."/>
            <person name="Morris K."/>
            <person name="Mottagui-Tabar S."/>
            <person name="Mulder N."/>
            <person name="Nakano N."/>
            <person name="Nakauchi H."/>
            <person name="Ng P."/>
            <person name="Nilsson R."/>
            <person name="Nishiguchi S."/>
            <person name="Nishikawa S."/>
            <person name="Nori F."/>
            <person name="Ohara O."/>
            <person name="Okazaki Y."/>
            <person name="Orlando V."/>
            <person name="Pang K.C."/>
            <person name="Pavan W.J."/>
            <person name="Pavesi G."/>
            <person name="Pesole G."/>
            <person name="Petrovsky N."/>
            <person name="Piazza S."/>
            <person name="Reed J."/>
            <person name="Reid J.F."/>
            <person name="Ring B.Z."/>
            <person name="Ringwald M."/>
            <person name="Rost B."/>
            <person name="Ruan Y."/>
            <person name="Salzberg S.L."/>
            <person name="Sandelin A."/>
            <person name="Schneider C."/>
            <person name="Schoenbach C."/>
            <person name="Sekiguchi K."/>
            <person name="Semple C.A."/>
            <person name="Seno S."/>
            <person name="Sessa L."/>
            <person name="Sheng Y."/>
            <person name="Shibata Y."/>
            <person name="Shimada H."/>
            <person name="Shimada K."/>
            <person name="Silva D."/>
            <person name="Sinclair B."/>
            <person name="Sperling S."/>
            <person name="Stupka E."/>
            <person name="Sugiura K."/>
            <person name="Sultana R."/>
            <person name="Takenaka Y."/>
            <person name="Taki K."/>
            <person name="Tammoja K."/>
            <person name="Tan S.L."/>
            <person name="Tang S."/>
            <person name="Taylor M.S."/>
            <person name="Tegner J."/>
            <person name="Teichmann S.A."/>
            <person name="Ueda H.R."/>
            <person name="van Nimwegen E."/>
            <person name="Verardo R."/>
            <person name="Wei C.L."/>
            <person name="Yagi K."/>
            <person name="Yamanishi H."/>
            <person name="Zabarovsky E."/>
            <person name="Zhu S."/>
            <person name="Zimmer A."/>
            <person name="Hide W."/>
            <person name="Bult C."/>
            <person name="Grimmond S.M."/>
            <person name="Teasdale R.D."/>
            <person name="Liu E.T."/>
            <person name="Brusic V."/>
            <person name="Quackenbush J."/>
            <person name="Wahlestedt C."/>
            <person name="Mattick J.S."/>
            <person name="Hume D.A."/>
            <person name="Kai C."/>
            <person name="Sasaki D."/>
            <person name="Tomaru Y."/>
            <person name="Fukuda S."/>
            <person name="Kanamori-Katayama M."/>
            <person name="Suzuki M."/>
            <person name="Aoki J."/>
            <person name="Arakawa T."/>
            <person name="Iida J."/>
            <person name="Imamura K."/>
            <person name="Itoh M."/>
            <person name="Kato T."/>
            <person name="Kawaji H."/>
            <person name="Kawagashira N."/>
            <person name="Kawashima T."/>
            <person name="Kojima M."/>
            <person name="Kondo S."/>
            <person name="Konno H."/>
            <person name="Nakano K."/>
            <person name="Ninomiya N."/>
            <person name="Nishio T."/>
            <person name="Okada M."/>
            <person name="Plessy C."/>
            <person name="Shibata K."/>
            <person name="Shiraki T."/>
            <person name="Suzuki S."/>
            <person name="Tagami M."/>
            <person name="Waki K."/>
            <person name="Watahiki A."/>
            <person name="Okamura-Oho Y."/>
            <person name="Suzuki H."/>
            <person name="Kawai J."/>
            <person name="Hayashizaki Y."/>
        </authorList>
    </citation>
    <scope>NUCLEOTIDE SEQUENCE [LARGE SCALE MRNA]</scope>
    <source>
        <strain>C57BL/6J</strain>
        <tissue>Cerebellum</tissue>
    </source>
</reference>
<reference key="3">
    <citation type="journal article" date="2009" name="PLoS Biol.">
        <title>Lineage-specific biology revealed by a finished genome assembly of the mouse.</title>
        <authorList>
            <person name="Church D.M."/>
            <person name="Goodstadt L."/>
            <person name="Hillier L.W."/>
            <person name="Zody M.C."/>
            <person name="Goldstein S."/>
            <person name="She X."/>
            <person name="Bult C.J."/>
            <person name="Agarwala R."/>
            <person name="Cherry J.L."/>
            <person name="DiCuccio M."/>
            <person name="Hlavina W."/>
            <person name="Kapustin Y."/>
            <person name="Meric P."/>
            <person name="Maglott D."/>
            <person name="Birtle Z."/>
            <person name="Marques A.C."/>
            <person name="Graves T."/>
            <person name="Zhou S."/>
            <person name="Teague B."/>
            <person name="Potamousis K."/>
            <person name="Churas C."/>
            <person name="Place M."/>
            <person name="Herschleb J."/>
            <person name="Runnheim R."/>
            <person name="Forrest D."/>
            <person name="Amos-Landgraf J."/>
            <person name="Schwartz D.C."/>
            <person name="Cheng Z."/>
            <person name="Lindblad-Toh K."/>
            <person name="Eichler E.E."/>
            <person name="Ponting C.P."/>
        </authorList>
    </citation>
    <scope>NUCLEOTIDE SEQUENCE [LARGE SCALE GENOMIC DNA]</scope>
    <source>
        <strain>C57BL/6J</strain>
    </source>
</reference>
<reference key="4">
    <citation type="submission" date="2005-07" db="EMBL/GenBank/DDBJ databases">
        <authorList>
            <person name="Mural R.J."/>
            <person name="Adams M.D."/>
            <person name="Myers E.W."/>
            <person name="Smith H.O."/>
            <person name="Venter J.C."/>
        </authorList>
    </citation>
    <scope>NUCLEOTIDE SEQUENCE [LARGE SCALE GENOMIC DNA]</scope>
</reference>
<organism>
    <name type="scientific">Mus musculus</name>
    <name type="common">Mouse</name>
    <dbReference type="NCBI Taxonomy" id="10090"/>
    <lineage>
        <taxon>Eukaryota</taxon>
        <taxon>Metazoa</taxon>
        <taxon>Chordata</taxon>
        <taxon>Craniata</taxon>
        <taxon>Vertebrata</taxon>
        <taxon>Euteleostomi</taxon>
        <taxon>Mammalia</taxon>
        <taxon>Eutheria</taxon>
        <taxon>Euarchontoglires</taxon>
        <taxon>Glires</taxon>
        <taxon>Rodentia</taxon>
        <taxon>Myomorpha</taxon>
        <taxon>Muroidea</taxon>
        <taxon>Muridae</taxon>
        <taxon>Murinae</taxon>
        <taxon>Mus</taxon>
        <taxon>Mus</taxon>
    </lineage>
</organism>
<gene>
    <name type="primary">Gpr63</name>
</gene>
<name>GPR63_MOUSE</name>
<protein>
    <recommendedName>
        <fullName>Probable G-protein coupled receptor 63</fullName>
    </recommendedName>
    <alternativeName>
        <fullName>PSP24-2</fullName>
    </alternativeName>
    <alternativeName>
        <fullName>PSP24-beta</fullName>
    </alternativeName>
</protein>
<proteinExistence type="evidence at transcript level"/>
<sequence>MVVSGVLTAPAVLTAPHSGTSNTTFVVFENSHVNITAPLPFQHPSAGPLLRYSLETMTSPGFSSLAVNSTAVTPAPAVFKSLNLAVQIILSAIMIFILFVSFLGNLVVCLMVYQKAAMRSAINILLASLAFADMLLAVLNMPFALVTILTTRWIFGKFFCRLSAMFFWLFVIEGVAILLIISIDRFLIIVQRQDKLNPYRAKVLIAVSWATAFSVAFPLAVGNPDLQIPSRAPQCVFGYTTNSGYQAYVILISLISFFIPFLVILYSFMGILNTLRHNALRIHSYPEGICLSQASKLGLMSLQRPFQMSIDMGFKTRAFTTILILFAVFIVCWAPFTTYSLVATFSKHFYYQHNFFEISTWLLWLCYLKSALNPLIYYWRIKKFHDACLDMMPKSFKFLPRLPGHTRRRIRPSAVYVCGEHRTVL</sequence>
<comment type="function">
    <text>Orphan receptor. May play a role in brain function.</text>
</comment>
<comment type="subcellular location">
    <subcellularLocation>
        <location>Cell membrane</location>
        <topology>Multi-pass membrane protein</topology>
    </subcellularLocation>
</comment>
<comment type="tissue specificity">
    <text>Brain specific.</text>
</comment>
<comment type="similarity">
    <text evidence="2">Belongs to the G-protein coupled receptor 1 family.</text>
</comment>
<feature type="chain" id="PRO_0000069582" description="Probable G-protein coupled receptor 63">
    <location>
        <begin position="1"/>
        <end position="425"/>
    </location>
</feature>
<feature type="topological domain" description="Extracellular" evidence="1">
    <location>
        <begin position="1"/>
        <end position="87"/>
    </location>
</feature>
<feature type="transmembrane region" description="Helical; Name=1" evidence="1">
    <location>
        <begin position="88"/>
        <end position="112"/>
    </location>
</feature>
<feature type="topological domain" description="Cytoplasmic" evidence="1">
    <location>
        <begin position="113"/>
        <end position="123"/>
    </location>
</feature>
<feature type="transmembrane region" description="Helical; Name=2" evidence="1">
    <location>
        <begin position="124"/>
        <end position="148"/>
    </location>
</feature>
<feature type="topological domain" description="Extracellular" evidence="1">
    <location>
        <begin position="149"/>
        <end position="165"/>
    </location>
</feature>
<feature type="transmembrane region" description="Helical; Name=3" evidence="1">
    <location>
        <begin position="166"/>
        <end position="190"/>
    </location>
</feature>
<feature type="topological domain" description="Cytoplasmic" evidence="1">
    <location>
        <begin position="191"/>
        <end position="202"/>
    </location>
</feature>
<feature type="transmembrane region" description="Helical; Name=4" evidence="1">
    <location>
        <begin position="203"/>
        <end position="222"/>
    </location>
</feature>
<feature type="topological domain" description="Extracellular" evidence="1">
    <location>
        <begin position="223"/>
        <end position="247"/>
    </location>
</feature>
<feature type="transmembrane region" description="Helical; Name=5" evidence="1">
    <location>
        <begin position="248"/>
        <end position="272"/>
    </location>
</feature>
<feature type="topological domain" description="Cytoplasmic" evidence="1">
    <location>
        <begin position="273"/>
        <end position="321"/>
    </location>
</feature>
<feature type="transmembrane region" description="Helical; Name=6" evidence="1">
    <location>
        <begin position="322"/>
        <end position="345"/>
    </location>
</feature>
<feature type="topological domain" description="Extracellular" evidence="1">
    <location>
        <begin position="346"/>
        <end position="357"/>
    </location>
</feature>
<feature type="transmembrane region" description="Helical; Name=7" evidence="1">
    <location>
        <begin position="358"/>
        <end position="379"/>
    </location>
</feature>
<feature type="topological domain" description="Cytoplasmic" evidence="1">
    <location>
        <begin position="380"/>
        <end position="425"/>
    </location>
</feature>
<feature type="glycosylation site" description="N-linked (GlcNAc...) asparagine" evidence="1">
    <location>
        <position position="22"/>
    </location>
</feature>
<feature type="glycosylation site" description="N-linked (GlcNAc...) asparagine" evidence="1">
    <location>
        <position position="34"/>
    </location>
</feature>
<feature type="glycosylation site" description="N-linked (GlcNAc...) asparagine" evidence="1">
    <location>
        <position position="68"/>
    </location>
</feature>
<feature type="sequence conflict" description="In Ref. 1; AAG42573." evidence="3" ref="1">
    <original>R</original>
    <variation>S</variation>
    <location>
        <position position="407"/>
    </location>
</feature>
<dbReference type="EMBL" id="AF139643">
    <property type="protein sequence ID" value="AAG42573.1"/>
    <property type="molecule type" value="Genomic_DNA"/>
</dbReference>
<dbReference type="EMBL" id="AK036257">
    <property type="protein sequence ID" value="BAC29364.1"/>
    <property type="molecule type" value="mRNA"/>
</dbReference>
<dbReference type="EMBL" id="AL772199">
    <property type="status" value="NOT_ANNOTATED_CDS"/>
    <property type="molecule type" value="Genomic_DNA"/>
</dbReference>
<dbReference type="EMBL" id="CH466538">
    <property type="protein sequence ID" value="EDL05529.1"/>
    <property type="molecule type" value="Genomic_DNA"/>
</dbReference>
<dbReference type="CCDS" id="CCDS18008.1"/>
<dbReference type="RefSeq" id="NP_001366555.1">
    <property type="nucleotide sequence ID" value="NM_001379626.1"/>
</dbReference>
<dbReference type="RefSeq" id="NP_001366556.1">
    <property type="nucleotide sequence ID" value="NM_001379627.1"/>
</dbReference>
<dbReference type="RefSeq" id="NP_109658.2">
    <property type="nucleotide sequence ID" value="NM_030733.3"/>
</dbReference>
<dbReference type="RefSeq" id="XP_006538445.1">
    <property type="nucleotide sequence ID" value="XM_006538382.3"/>
</dbReference>
<dbReference type="RefSeq" id="XP_006538446.1">
    <property type="nucleotide sequence ID" value="XM_006538383.5"/>
</dbReference>
<dbReference type="SMR" id="Q9EQQ3"/>
<dbReference type="CORUM" id="Q9EQQ3"/>
<dbReference type="FunCoup" id="Q9EQQ3">
    <property type="interactions" value="675"/>
</dbReference>
<dbReference type="STRING" id="10090.ENSMUSP00000039312"/>
<dbReference type="GlyCosmos" id="Q9EQQ3">
    <property type="glycosylation" value="3 sites, No reported glycans"/>
</dbReference>
<dbReference type="GlyGen" id="Q9EQQ3">
    <property type="glycosylation" value="4 sites"/>
</dbReference>
<dbReference type="PhosphoSitePlus" id="Q9EQQ3"/>
<dbReference type="PaxDb" id="10090-ENSMUSP00000039312"/>
<dbReference type="ProteomicsDB" id="271276"/>
<dbReference type="Antibodypedia" id="18869">
    <property type="antibodies" value="220 antibodies from 28 providers"/>
</dbReference>
<dbReference type="DNASU" id="81006"/>
<dbReference type="Ensembl" id="ENSMUST00000038920.2">
    <property type="protein sequence ID" value="ENSMUSP00000039312.2"/>
    <property type="gene ID" value="ENSMUSG00000040372.3"/>
</dbReference>
<dbReference type="GeneID" id="81006"/>
<dbReference type="KEGG" id="mmu:81006"/>
<dbReference type="UCSC" id="uc008see.1">
    <property type="organism name" value="mouse"/>
</dbReference>
<dbReference type="AGR" id="MGI:2135884"/>
<dbReference type="CTD" id="81491"/>
<dbReference type="MGI" id="MGI:2135884">
    <property type="gene designation" value="Gpr63"/>
</dbReference>
<dbReference type="VEuPathDB" id="HostDB:ENSMUSG00000040372"/>
<dbReference type="eggNOG" id="KOG3656">
    <property type="taxonomic scope" value="Eukaryota"/>
</dbReference>
<dbReference type="GeneTree" id="ENSGT00950000183001"/>
<dbReference type="HOGENOM" id="CLU_009579_3_9_1"/>
<dbReference type="InParanoid" id="Q9EQQ3"/>
<dbReference type="OMA" id="SKHFYYK"/>
<dbReference type="OrthoDB" id="10018052at2759"/>
<dbReference type="PhylomeDB" id="Q9EQQ3"/>
<dbReference type="TreeFam" id="TF332301"/>
<dbReference type="BioGRID-ORCS" id="81006">
    <property type="hits" value="4 hits in 78 CRISPR screens"/>
</dbReference>
<dbReference type="PRO" id="PR:Q9EQQ3"/>
<dbReference type="Proteomes" id="UP000000589">
    <property type="component" value="Chromosome 4"/>
</dbReference>
<dbReference type="RNAct" id="Q9EQQ3">
    <property type="molecule type" value="protein"/>
</dbReference>
<dbReference type="Bgee" id="ENSMUSG00000040372">
    <property type="expression patterns" value="Expressed in secondary oocyte and 54 other cell types or tissues"/>
</dbReference>
<dbReference type="GO" id="GO:0005829">
    <property type="term" value="C:cytosol"/>
    <property type="evidence" value="ECO:0007669"/>
    <property type="project" value="Ensembl"/>
</dbReference>
<dbReference type="GO" id="GO:0016020">
    <property type="term" value="C:membrane"/>
    <property type="evidence" value="ECO:0000250"/>
    <property type="project" value="MGI"/>
</dbReference>
<dbReference type="GO" id="GO:0005654">
    <property type="term" value="C:nucleoplasm"/>
    <property type="evidence" value="ECO:0007669"/>
    <property type="project" value="Ensembl"/>
</dbReference>
<dbReference type="GO" id="GO:0005886">
    <property type="term" value="C:plasma membrane"/>
    <property type="evidence" value="ECO:0007669"/>
    <property type="project" value="UniProtKB-SubCell"/>
</dbReference>
<dbReference type="GO" id="GO:0043235">
    <property type="term" value="C:receptor complex"/>
    <property type="evidence" value="ECO:0000266"/>
    <property type="project" value="MGI"/>
</dbReference>
<dbReference type="GO" id="GO:0004930">
    <property type="term" value="F:G protein-coupled receptor activity"/>
    <property type="evidence" value="ECO:0000250"/>
    <property type="project" value="MGI"/>
</dbReference>
<dbReference type="CDD" id="cd15404">
    <property type="entry name" value="7tmA_GPR63"/>
    <property type="match status" value="1"/>
</dbReference>
<dbReference type="FunFam" id="1.20.1070.10:FF:000080">
    <property type="entry name" value="probable G-protein coupled receptor 63"/>
    <property type="match status" value="1"/>
</dbReference>
<dbReference type="Gene3D" id="1.20.1070.10">
    <property type="entry name" value="Rhodopsin 7-helix transmembrane proteins"/>
    <property type="match status" value="1"/>
</dbReference>
<dbReference type="InterPro" id="IPR051880">
    <property type="entry name" value="GPC_Orphan_Receptors"/>
</dbReference>
<dbReference type="InterPro" id="IPR000276">
    <property type="entry name" value="GPCR_Rhodpsn"/>
</dbReference>
<dbReference type="InterPro" id="IPR017452">
    <property type="entry name" value="GPCR_Rhodpsn_7TM"/>
</dbReference>
<dbReference type="PANTHER" id="PTHR24245">
    <property type="entry name" value="G-PROTEIN COUPLED RECEPTOR"/>
    <property type="match status" value="1"/>
</dbReference>
<dbReference type="PANTHER" id="PTHR24245:SF1">
    <property type="entry name" value="G-PROTEIN COUPLED RECEPTOR 63-RELATED"/>
    <property type="match status" value="1"/>
</dbReference>
<dbReference type="Pfam" id="PF00001">
    <property type="entry name" value="7tm_1"/>
    <property type="match status" value="1"/>
</dbReference>
<dbReference type="PRINTS" id="PR00237">
    <property type="entry name" value="GPCRRHODOPSN"/>
</dbReference>
<dbReference type="SMART" id="SM01381">
    <property type="entry name" value="7TM_GPCR_Srsx"/>
    <property type="match status" value="1"/>
</dbReference>
<dbReference type="SUPFAM" id="SSF81321">
    <property type="entry name" value="Family A G protein-coupled receptor-like"/>
    <property type="match status" value="1"/>
</dbReference>
<dbReference type="PROSITE" id="PS50262">
    <property type="entry name" value="G_PROTEIN_RECEP_F1_2"/>
    <property type="match status" value="1"/>
</dbReference>
<accession>Q9EQQ3</accession>
<accession>Q8BZ93</accession>